<accession>B5EI59</accession>
<gene>
    <name evidence="1" type="primary">rbfA</name>
    <name type="ordered locus">Gbem_1304</name>
</gene>
<proteinExistence type="inferred from homology"/>
<evidence type="ECO:0000255" key="1">
    <source>
        <dbReference type="HAMAP-Rule" id="MF_00003"/>
    </source>
</evidence>
<protein>
    <recommendedName>
        <fullName evidence="1">Ribosome-binding factor A</fullName>
    </recommendedName>
</protein>
<organism>
    <name type="scientific">Citrifermentans bemidjiense (strain ATCC BAA-1014 / DSM 16622 / JCM 12645 / Bem)</name>
    <name type="common">Geobacter bemidjiensis</name>
    <dbReference type="NCBI Taxonomy" id="404380"/>
    <lineage>
        <taxon>Bacteria</taxon>
        <taxon>Pseudomonadati</taxon>
        <taxon>Thermodesulfobacteriota</taxon>
        <taxon>Desulfuromonadia</taxon>
        <taxon>Geobacterales</taxon>
        <taxon>Geobacteraceae</taxon>
        <taxon>Citrifermentans</taxon>
    </lineage>
</organism>
<dbReference type="EMBL" id="CP001124">
    <property type="protein sequence ID" value="ACH38323.1"/>
    <property type="molecule type" value="Genomic_DNA"/>
</dbReference>
<dbReference type="RefSeq" id="WP_012529734.1">
    <property type="nucleotide sequence ID" value="NC_011146.1"/>
</dbReference>
<dbReference type="SMR" id="B5EI59"/>
<dbReference type="STRING" id="404380.Gbem_1304"/>
<dbReference type="KEGG" id="gbm:Gbem_1304"/>
<dbReference type="eggNOG" id="COG0858">
    <property type="taxonomic scope" value="Bacteria"/>
</dbReference>
<dbReference type="HOGENOM" id="CLU_089475_6_3_7"/>
<dbReference type="OrthoDB" id="307788at2"/>
<dbReference type="Proteomes" id="UP000008825">
    <property type="component" value="Chromosome"/>
</dbReference>
<dbReference type="GO" id="GO:0005829">
    <property type="term" value="C:cytosol"/>
    <property type="evidence" value="ECO:0007669"/>
    <property type="project" value="TreeGrafter"/>
</dbReference>
<dbReference type="GO" id="GO:0043024">
    <property type="term" value="F:ribosomal small subunit binding"/>
    <property type="evidence" value="ECO:0007669"/>
    <property type="project" value="TreeGrafter"/>
</dbReference>
<dbReference type="GO" id="GO:0030490">
    <property type="term" value="P:maturation of SSU-rRNA"/>
    <property type="evidence" value="ECO:0007669"/>
    <property type="project" value="UniProtKB-UniRule"/>
</dbReference>
<dbReference type="Gene3D" id="3.30.300.20">
    <property type="match status" value="1"/>
</dbReference>
<dbReference type="HAMAP" id="MF_00003">
    <property type="entry name" value="RbfA"/>
    <property type="match status" value="1"/>
</dbReference>
<dbReference type="InterPro" id="IPR015946">
    <property type="entry name" value="KH_dom-like_a/b"/>
</dbReference>
<dbReference type="InterPro" id="IPR000238">
    <property type="entry name" value="RbfA"/>
</dbReference>
<dbReference type="InterPro" id="IPR023799">
    <property type="entry name" value="RbfA_dom_sf"/>
</dbReference>
<dbReference type="InterPro" id="IPR020053">
    <property type="entry name" value="Ribosome-bd_factorA_CS"/>
</dbReference>
<dbReference type="NCBIfam" id="NF010388">
    <property type="entry name" value="PRK13815.1"/>
    <property type="match status" value="1"/>
</dbReference>
<dbReference type="NCBIfam" id="TIGR00082">
    <property type="entry name" value="rbfA"/>
    <property type="match status" value="1"/>
</dbReference>
<dbReference type="PANTHER" id="PTHR33515">
    <property type="entry name" value="RIBOSOME-BINDING FACTOR A, CHLOROPLASTIC-RELATED"/>
    <property type="match status" value="1"/>
</dbReference>
<dbReference type="PANTHER" id="PTHR33515:SF1">
    <property type="entry name" value="RIBOSOME-BINDING FACTOR A, CHLOROPLASTIC-RELATED"/>
    <property type="match status" value="1"/>
</dbReference>
<dbReference type="Pfam" id="PF02033">
    <property type="entry name" value="RBFA"/>
    <property type="match status" value="1"/>
</dbReference>
<dbReference type="SUPFAM" id="SSF89919">
    <property type="entry name" value="Ribosome-binding factor A, RbfA"/>
    <property type="match status" value="1"/>
</dbReference>
<dbReference type="PROSITE" id="PS01319">
    <property type="entry name" value="RBFA"/>
    <property type="match status" value="1"/>
</dbReference>
<comment type="function">
    <text evidence="1">One of several proteins that assist in the late maturation steps of the functional core of the 30S ribosomal subunit. Associates with free 30S ribosomal subunits (but not with 30S subunits that are part of 70S ribosomes or polysomes). Required for efficient processing of 16S rRNA. May interact with the 5'-terminal helix region of 16S rRNA.</text>
</comment>
<comment type="subunit">
    <text evidence="1">Monomer. Binds 30S ribosomal subunits, but not 50S ribosomal subunits or 70S ribosomes.</text>
</comment>
<comment type="subcellular location">
    <subcellularLocation>
        <location evidence="1">Cytoplasm</location>
    </subcellularLocation>
</comment>
<comment type="similarity">
    <text evidence="1">Belongs to the RbfA family.</text>
</comment>
<keyword id="KW-0963">Cytoplasm</keyword>
<keyword id="KW-1185">Reference proteome</keyword>
<keyword id="KW-0690">Ribosome biogenesis</keyword>
<reference key="1">
    <citation type="submission" date="2008-07" db="EMBL/GenBank/DDBJ databases">
        <title>Complete sequence of Geobacter bemidjiensis BEM.</title>
        <authorList>
            <consortium name="US DOE Joint Genome Institute"/>
            <person name="Lucas S."/>
            <person name="Copeland A."/>
            <person name="Lapidus A."/>
            <person name="Glavina del Rio T."/>
            <person name="Dalin E."/>
            <person name="Tice H."/>
            <person name="Bruce D."/>
            <person name="Goodwin L."/>
            <person name="Pitluck S."/>
            <person name="Kiss H."/>
            <person name="Brettin T."/>
            <person name="Detter J.C."/>
            <person name="Han C."/>
            <person name="Kuske C.R."/>
            <person name="Schmutz J."/>
            <person name="Larimer F."/>
            <person name="Land M."/>
            <person name="Hauser L."/>
            <person name="Kyrpides N."/>
            <person name="Lykidis A."/>
            <person name="Lovley D."/>
            <person name="Richardson P."/>
        </authorList>
    </citation>
    <scope>NUCLEOTIDE SEQUENCE [LARGE SCALE GENOMIC DNA]</scope>
    <source>
        <strain>ATCC BAA-1014 / DSM 16622 / JCM 12645 / Bem</strain>
    </source>
</reference>
<name>RBFA_CITBB</name>
<feature type="chain" id="PRO_1000088891" description="Ribosome-binding factor A">
    <location>
        <begin position="1"/>
        <end position="119"/>
    </location>
</feature>
<sequence>MVKRSDKVGEQIHKIISELLIKGLKDPRIGFLTITGVKMTPDLRQATVYFTVHGSDEDKKNSEAGLNSAKGYIRKEIGQALKMRFVPEVLFKYDTSLDYGQHIESILKEIGATDDGEQS</sequence>